<name>ISPD_BURTA</name>
<protein>
    <recommendedName>
        <fullName evidence="1">2-C-methyl-D-erythritol 4-phosphate cytidylyltransferase</fullName>
        <ecNumber evidence="1">2.7.7.60</ecNumber>
    </recommendedName>
    <alternativeName>
        <fullName evidence="1">4-diphosphocytidyl-2C-methyl-D-erythritol synthase</fullName>
    </alternativeName>
    <alternativeName>
        <fullName evidence="1">MEP cytidylyltransferase</fullName>
        <shortName evidence="1">MCT</shortName>
    </alternativeName>
</protein>
<comment type="function">
    <text evidence="1">Catalyzes the formation of 4-diphosphocytidyl-2-C-methyl-D-erythritol from CTP and 2-C-methyl-D-erythritol 4-phosphate (MEP).</text>
</comment>
<comment type="catalytic activity">
    <reaction evidence="1">
        <text>2-C-methyl-D-erythritol 4-phosphate + CTP + H(+) = 4-CDP-2-C-methyl-D-erythritol + diphosphate</text>
        <dbReference type="Rhea" id="RHEA:13429"/>
        <dbReference type="ChEBI" id="CHEBI:15378"/>
        <dbReference type="ChEBI" id="CHEBI:33019"/>
        <dbReference type="ChEBI" id="CHEBI:37563"/>
        <dbReference type="ChEBI" id="CHEBI:57823"/>
        <dbReference type="ChEBI" id="CHEBI:58262"/>
        <dbReference type="EC" id="2.7.7.60"/>
    </reaction>
</comment>
<comment type="pathway">
    <text evidence="1">Isoprenoid biosynthesis; isopentenyl diphosphate biosynthesis via DXP pathway; isopentenyl diphosphate from 1-deoxy-D-xylulose 5-phosphate: step 2/6.</text>
</comment>
<comment type="similarity">
    <text evidence="1">Belongs to the IspD/TarI cytidylyltransferase family. IspD subfamily.</text>
</comment>
<reference key="1">
    <citation type="journal article" date="2005" name="BMC Genomics">
        <title>Bacterial genome adaptation to niches: divergence of the potential virulence genes in three Burkholderia species of different survival strategies.</title>
        <authorList>
            <person name="Kim H.S."/>
            <person name="Schell M.A."/>
            <person name="Yu Y."/>
            <person name="Ulrich R.L."/>
            <person name="Sarria S.H."/>
            <person name="Nierman W.C."/>
            <person name="DeShazer D."/>
        </authorList>
    </citation>
    <scope>NUCLEOTIDE SEQUENCE [LARGE SCALE GENOMIC DNA]</scope>
    <source>
        <strain>ATCC 700388 / DSM 13276 / CCUG 48851 / CIP 106301 / E264</strain>
    </source>
</reference>
<organism>
    <name type="scientific">Burkholderia thailandensis (strain ATCC 700388 / DSM 13276 / CCUG 48851 / CIP 106301 / E264)</name>
    <dbReference type="NCBI Taxonomy" id="271848"/>
    <lineage>
        <taxon>Bacteria</taxon>
        <taxon>Pseudomonadati</taxon>
        <taxon>Pseudomonadota</taxon>
        <taxon>Betaproteobacteria</taxon>
        <taxon>Burkholderiales</taxon>
        <taxon>Burkholderiaceae</taxon>
        <taxon>Burkholderia</taxon>
        <taxon>pseudomallei group</taxon>
    </lineage>
</organism>
<accession>Q2SWT6</accession>
<dbReference type="EC" id="2.7.7.60" evidence="1"/>
<dbReference type="EMBL" id="CP000086">
    <property type="protein sequence ID" value="ABC37697.1"/>
    <property type="molecule type" value="Genomic_DNA"/>
</dbReference>
<dbReference type="RefSeq" id="WP_009890558.1">
    <property type="nucleotide sequence ID" value="NC_007651.1"/>
</dbReference>
<dbReference type="PDB" id="4YS8">
    <property type="method" value="X-ray"/>
    <property type="resolution" value="2.45 A"/>
    <property type="chains" value="A/B/C/D=2-236"/>
</dbReference>
<dbReference type="PDB" id="4ZDQ">
    <property type="method" value="X-ray"/>
    <property type="resolution" value="2.30 A"/>
    <property type="chains" value="A/B/C/D=2-236"/>
</dbReference>
<dbReference type="PDBsum" id="4YS8"/>
<dbReference type="PDBsum" id="4ZDQ"/>
<dbReference type="SMR" id="Q2SWT6"/>
<dbReference type="ChEMBL" id="CHEMBL3734645"/>
<dbReference type="GeneID" id="45121817"/>
<dbReference type="KEGG" id="bte:BTH_I2089"/>
<dbReference type="HOGENOM" id="CLU_061281_3_0_4"/>
<dbReference type="UniPathway" id="UPA00056">
    <property type="reaction ID" value="UER00093"/>
</dbReference>
<dbReference type="EvolutionaryTrace" id="Q2SWT6"/>
<dbReference type="Proteomes" id="UP000001930">
    <property type="component" value="Chromosome I"/>
</dbReference>
<dbReference type="GO" id="GO:0050518">
    <property type="term" value="F:2-C-methyl-D-erythritol 4-phosphate cytidylyltransferase activity"/>
    <property type="evidence" value="ECO:0007669"/>
    <property type="project" value="UniProtKB-UniRule"/>
</dbReference>
<dbReference type="GO" id="GO:0019288">
    <property type="term" value="P:isopentenyl diphosphate biosynthetic process, methylerythritol 4-phosphate pathway"/>
    <property type="evidence" value="ECO:0007669"/>
    <property type="project" value="UniProtKB-UniRule"/>
</dbReference>
<dbReference type="CDD" id="cd02516">
    <property type="entry name" value="CDP-ME_synthetase"/>
    <property type="match status" value="1"/>
</dbReference>
<dbReference type="FunFam" id="3.90.550.10:FF:000003">
    <property type="entry name" value="2-C-methyl-D-erythritol 4-phosphate cytidylyltransferase"/>
    <property type="match status" value="1"/>
</dbReference>
<dbReference type="Gene3D" id="3.90.550.10">
    <property type="entry name" value="Spore Coat Polysaccharide Biosynthesis Protein SpsA, Chain A"/>
    <property type="match status" value="1"/>
</dbReference>
<dbReference type="HAMAP" id="MF_00108">
    <property type="entry name" value="IspD"/>
    <property type="match status" value="1"/>
</dbReference>
<dbReference type="InterPro" id="IPR001228">
    <property type="entry name" value="IspD"/>
</dbReference>
<dbReference type="InterPro" id="IPR034683">
    <property type="entry name" value="IspD/TarI"/>
</dbReference>
<dbReference type="InterPro" id="IPR050088">
    <property type="entry name" value="IspD/TarI_cytidylyltransf_bact"/>
</dbReference>
<dbReference type="InterPro" id="IPR018294">
    <property type="entry name" value="ISPD_synthase_CS"/>
</dbReference>
<dbReference type="InterPro" id="IPR029044">
    <property type="entry name" value="Nucleotide-diphossugar_trans"/>
</dbReference>
<dbReference type="NCBIfam" id="TIGR00453">
    <property type="entry name" value="ispD"/>
    <property type="match status" value="1"/>
</dbReference>
<dbReference type="PANTHER" id="PTHR32125">
    <property type="entry name" value="2-C-METHYL-D-ERYTHRITOL 4-PHOSPHATE CYTIDYLYLTRANSFERASE, CHLOROPLASTIC"/>
    <property type="match status" value="1"/>
</dbReference>
<dbReference type="PANTHER" id="PTHR32125:SF4">
    <property type="entry name" value="2-C-METHYL-D-ERYTHRITOL 4-PHOSPHATE CYTIDYLYLTRANSFERASE, CHLOROPLASTIC"/>
    <property type="match status" value="1"/>
</dbReference>
<dbReference type="Pfam" id="PF01128">
    <property type="entry name" value="IspD"/>
    <property type="match status" value="1"/>
</dbReference>
<dbReference type="SUPFAM" id="SSF53448">
    <property type="entry name" value="Nucleotide-diphospho-sugar transferases"/>
    <property type="match status" value="1"/>
</dbReference>
<dbReference type="PROSITE" id="PS01295">
    <property type="entry name" value="ISPD"/>
    <property type="match status" value="1"/>
</dbReference>
<evidence type="ECO:0000255" key="1">
    <source>
        <dbReference type="HAMAP-Rule" id="MF_00108"/>
    </source>
</evidence>
<evidence type="ECO:0007829" key="2">
    <source>
        <dbReference type="PDB" id="4YS8"/>
    </source>
</evidence>
<evidence type="ECO:0007829" key="3">
    <source>
        <dbReference type="PDB" id="4ZDQ"/>
    </source>
</evidence>
<gene>
    <name evidence="1" type="primary">ispD</name>
    <name type="ordered locus">BTH_I2089</name>
</gene>
<feature type="chain" id="PRO_0000237780" description="2-C-methyl-D-erythritol 4-phosphate cytidylyltransferase">
    <location>
        <begin position="1"/>
        <end position="236"/>
    </location>
</feature>
<feature type="site" description="Transition state stabilizer" evidence="1">
    <location>
        <position position="17"/>
    </location>
</feature>
<feature type="site" description="Transition state stabilizer" evidence="1">
    <location>
        <position position="24"/>
    </location>
</feature>
<feature type="site" description="Positions MEP for the nucleophilic attack" evidence="1">
    <location>
        <position position="159"/>
    </location>
</feature>
<feature type="site" description="Positions MEP for the nucleophilic attack" evidence="1">
    <location>
        <position position="215"/>
    </location>
</feature>
<feature type="strand" evidence="3">
    <location>
        <begin position="5"/>
        <end position="10"/>
    </location>
</feature>
<feature type="helix" evidence="3">
    <location>
        <begin position="16"/>
        <end position="18"/>
    </location>
</feature>
<feature type="helix" evidence="3">
    <location>
        <begin position="24"/>
        <end position="26"/>
    </location>
</feature>
<feature type="strand" evidence="2">
    <location>
        <begin position="27"/>
        <end position="29"/>
    </location>
</feature>
<feature type="helix" evidence="3">
    <location>
        <begin position="34"/>
        <end position="43"/>
    </location>
</feature>
<feature type="strand" evidence="3">
    <location>
        <begin position="48"/>
        <end position="54"/>
    </location>
</feature>
<feature type="helix" evidence="3">
    <location>
        <begin position="64"/>
        <end position="67"/>
    </location>
</feature>
<feature type="strand" evidence="3">
    <location>
        <begin position="73"/>
        <end position="75"/>
    </location>
</feature>
<feature type="helix" evidence="3">
    <location>
        <begin position="82"/>
        <end position="92"/>
    </location>
</feature>
<feature type="helix" evidence="3">
    <location>
        <begin position="93"/>
        <end position="96"/>
    </location>
</feature>
<feature type="strand" evidence="3">
    <location>
        <begin position="102"/>
        <end position="106"/>
    </location>
</feature>
<feature type="helix" evidence="3">
    <location>
        <begin position="116"/>
        <end position="126"/>
    </location>
</feature>
<feature type="strand" evidence="3">
    <location>
        <begin position="130"/>
        <end position="138"/>
    </location>
</feature>
<feature type="strand" evidence="3">
    <location>
        <begin position="143"/>
        <end position="145"/>
    </location>
</feature>
<feature type="strand" evidence="3">
    <location>
        <begin position="155"/>
        <end position="157"/>
    </location>
</feature>
<feature type="strand" evidence="3">
    <location>
        <begin position="162"/>
        <end position="172"/>
    </location>
</feature>
<feature type="helix" evidence="3">
    <location>
        <begin position="173"/>
        <end position="185"/>
    </location>
</feature>
<feature type="helix" evidence="3">
    <location>
        <begin position="193"/>
        <end position="199"/>
    </location>
</feature>
<feature type="strand" evidence="3">
    <location>
        <begin position="205"/>
        <end position="208"/>
    </location>
</feature>
<feature type="helix" evidence="3">
    <location>
        <begin position="211"/>
        <end position="213"/>
    </location>
</feature>
<feature type="helix" evidence="3">
    <location>
        <begin position="220"/>
        <end position="228"/>
    </location>
</feature>
<proteinExistence type="evidence at protein level"/>
<keyword id="KW-0002">3D-structure</keyword>
<keyword id="KW-0414">Isoprene biosynthesis</keyword>
<keyword id="KW-0548">Nucleotidyltransferase</keyword>
<keyword id="KW-0808">Transferase</keyword>
<sequence>MTSRLFALIPCAGTGSRSGSALPKQYRTLAGRALLHYTLAAFDACSEFAQTLVVISPDDAHFDARRFAGLRFAVRRCGGASRQASVMNGLIQLAEFGATDADWVLVHDAARPGITPALIRTLIGALKDDPVGGIVALPVADTLKRVPAGGDAIERTESRNGLWQAQTPQMFRIGMLRDAIQRAQLEGRDLTDEASAIEWAGHTPRVVQGSLRNFKVTYPEDFDLAEAILAHPARAS</sequence>